<organism>
    <name type="scientific">Yersinia pseudotuberculosis serotype O:3 (strain YPIII)</name>
    <dbReference type="NCBI Taxonomy" id="502800"/>
    <lineage>
        <taxon>Bacteria</taxon>
        <taxon>Pseudomonadati</taxon>
        <taxon>Pseudomonadota</taxon>
        <taxon>Gammaproteobacteria</taxon>
        <taxon>Enterobacterales</taxon>
        <taxon>Yersiniaceae</taxon>
        <taxon>Yersinia</taxon>
    </lineage>
</organism>
<comment type="function">
    <text evidence="1">This protein specifically catalyzes the removal of signal peptides from prolipoproteins.</text>
</comment>
<comment type="catalytic activity">
    <reaction evidence="1">
        <text>Release of signal peptides from bacterial membrane prolipoproteins. Hydrolyzes -Xaa-Yaa-Zaa-|-(S,diacylglyceryl)Cys-, in which Xaa is hydrophobic (preferably Leu), and Yaa (Ala or Ser) and Zaa (Gly or Ala) have small, neutral side chains.</text>
        <dbReference type="EC" id="3.4.23.36"/>
    </reaction>
</comment>
<comment type="pathway">
    <text evidence="1">Protein modification; lipoprotein biosynthesis (signal peptide cleavage).</text>
</comment>
<comment type="subcellular location">
    <subcellularLocation>
        <location evidence="1">Cell inner membrane</location>
        <topology evidence="1">Multi-pass membrane protein</topology>
    </subcellularLocation>
</comment>
<comment type="similarity">
    <text evidence="1">Belongs to the peptidase A8 family.</text>
</comment>
<evidence type="ECO:0000255" key="1">
    <source>
        <dbReference type="HAMAP-Rule" id="MF_00161"/>
    </source>
</evidence>
<dbReference type="EC" id="3.4.23.36" evidence="1"/>
<dbReference type="EMBL" id="CP000950">
    <property type="protein sequence ID" value="ACA69854.1"/>
    <property type="molecule type" value="Genomic_DNA"/>
</dbReference>
<dbReference type="RefSeq" id="WP_002210508.1">
    <property type="nucleotide sequence ID" value="NZ_CP009792.1"/>
</dbReference>
<dbReference type="SMR" id="B1JKZ7"/>
<dbReference type="MEROPS" id="A08.001"/>
<dbReference type="GeneID" id="57974134"/>
<dbReference type="KEGG" id="ypy:YPK_3587"/>
<dbReference type="PATRIC" id="fig|502800.11.peg.4335"/>
<dbReference type="UniPathway" id="UPA00665"/>
<dbReference type="GO" id="GO:0005886">
    <property type="term" value="C:plasma membrane"/>
    <property type="evidence" value="ECO:0007669"/>
    <property type="project" value="UniProtKB-SubCell"/>
</dbReference>
<dbReference type="GO" id="GO:0004190">
    <property type="term" value="F:aspartic-type endopeptidase activity"/>
    <property type="evidence" value="ECO:0007669"/>
    <property type="project" value="UniProtKB-UniRule"/>
</dbReference>
<dbReference type="GO" id="GO:0006508">
    <property type="term" value="P:proteolysis"/>
    <property type="evidence" value="ECO:0007669"/>
    <property type="project" value="UniProtKB-KW"/>
</dbReference>
<dbReference type="HAMAP" id="MF_00161">
    <property type="entry name" value="LspA"/>
    <property type="match status" value="1"/>
</dbReference>
<dbReference type="InterPro" id="IPR001872">
    <property type="entry name" value="Peptidase_A8"/>
</dbReference>
<dbReference type="NCBIfam" id="TIGR00077">
    <property type="entry name" value="lspA"/>
    <property type="match status" value="1"/>
</dbReference>
<dbReference type="PANTHER" id="PTHR33695">
    <property type="entry name" value="LIPOPROTEIN SIGNAL PEPTIDASE"/>
    <property type="match status" value="1"/>
</dbReference>
<dbReference type="PANTHER" id="PTHR33695:SF1">
    <property type="entry name" value="LIPOPROTEIN SIGNAL PEPTIDASE"/>
    <property type="match status" value="1"/>
</dbReference>
<dbReference type="Pfam" id="PF01252">
    <property type="entry name" value="Peptidase_A8"/>
    <property type="match status" value="1"/>
</dbReference>
<dbReference type="PRINTS" id="PR00781">
    <property type="entry name" value="LIPOSIGPTASE"/>
</dbReference>
<dbReference type="PROSITE" id="PS00855">
    <property type="entry name" value="SPASE_II"/>
    <property type="match status" value="1"/>
</dbReference>
<name>LSPA_YERPY</name>
<sequence length="169" mass="18937">MNKPICSTGLRWLWLAVVVVILDISSKQWVMAHFALYESVPLIPFFNLTYAQNFGAAFSFLADKSGWQRWFFAGIAIGISVVLMVMMYRSTAKQRLINCAYALIIGGALGNLYDRLVHGAVNDFLDFYINNWHFPTFNLADVAICIGAALVIFEGFLSPVEKNAVNNDE</sequence>
<proteinExistence type="inferred from homology"/>
<feature type="chain" id="PRO_1000097290" description="Lipoprotein signal peptidase">
    <location>
        <begin position="1"/>
        <end position="169"/>
    </location>
</feature>
<feature type="transmembrane region" description="Helical" evidence="1">
    <location>
        <begin position="4"/>
        <end position="24"/>
    </location>
</feature>
<feature type="transmembrane region" description="Helical" evidence="1">
    <location>
        <begin position="29"/>
        <end position="49"/>
    </location>
</feature>
<feature type="transmembrane region" description="Helical" evidence="1">
    <location>
        <begin position="70"/>
        <end position="90"/>
    </location>
</feature>
<feature type="transmembrane region" description="Helical" evidence="1">
    <location>
        <begin position="101"/>
        <end position="121"/>
    </location>
</feature>
<feature type="transmembrane region" description="Helical" evidence="1">
    <location>
        <begin position="137"/>
        <end position="157"/>
    </location>
</feature>
<feature type="active site" evidence="1">
    <location>
        <position position="123"/>
    </location>
</feature>
<feature type="active site" evidence="1">
    <location>
        <position position="141"/>
    </location>
</feature>
<keyword id="KW-0064">Aspartyl protease</keyword>
<keyword id="KW-0997">Cell inner membrane</keyword>
<keyword id="KW-1003">Cell membrane</keyword>
<keyword id="KW-0378">Hydrolase</keyword>
<keyword id="KW-0472">Membrane</keyword>
<keyword id="KW-0645">Protease</keyword>
<keyword id="KW-0812">Transmembrane</keyword>
<keyword id="KW-1133">Transmembrane helix</keyword>
<reference key="1">
    <citation type="submission" date="2008-02" db="EMBL/GenBank/DDBJ databases">
        <title>Complete sequence of Yersinia pseudotuberculosis YPIII.</title>
        <authorList>
            <consortium name="US DOE Joint Genome Institute"/>
            <person name="Copeland A."/>
            <person name="Lucas S."/>
            <person name="Lapidus A."/>
            <person name="Glavina del Rio T."/>
            <person name="Dalin E."/>
            <person name="Tice H."/>
            <person name="Bruce D."/>
            <person name="Goodwin L."/>
            <person name="Pitluck S."/>
            <person name="Munk A.C."/>
            <person name="Brettin T."/>
            <person name="Detter J.C."/>
            <person name="Han C."/>
            <person name="Tapia R."/>
            <person name="Schmutz J."/>
            <person name="Larimer F."/>
            <person name="Land M."/>
            <person name="Hauser L."/>
            <person name="Challacombe J.F."/>
            <person name="Green L."/>
            <person name="Lindler L.E."/>
            <person name="Nikolich M.P."/>
            <person name="Richardson P."/>
        </authorList>
    </citation>
    <scope>NUCLEOTIDE SEQUENCE [LARGE SCALE GENOMIC DNA]</scope>
    <source>
        <strain>YPIII</strain>
    </source>
</reference>
<accession>B1JKZ7</accession>
<protein>
    <recommendedName>
        <fullName evidence="1">Lipoprotein signal peptidase</fullName>
        <ecNumber evidence="1">3.4.23.36</ecNumber>
    </recommendedName>
    <alternativeName>
        <fullName evidence="1">Prolipoprotein signal peptidase</fullName>
    </alternativeName>
    <alternativeName>
        <fullName evidence="1">Signal peptidase II</fullName>
        <shortName evidence="1">SPase II</shortName>
    </alternativeName>
</protein>
<gene>
    <name evidence="1" type="primary">lspA</name>
    <name type="ordered locus">YPK_3587</name>
</gene>